<evidence type="ECO:0000255" key="1">
    <source>
        <dbReference type="HAMAP-Rule" id="MF_01713"/>
    </source>
</evidence>
<evidence type="ECO:0000256" key="2">
    <source>
        <dbReference type="SAM" id="MobiDB-lite"/>
    </source>
</evidence>
<gene>
    <name evidence="1" type="primary">phnC</name>
    <name type="ordered locus">Bxeno_B2147</name>
    <name type="ORF">Bxe_B0839</name>
</gene>
<name>PHNC_PARXL</name>
<organism>
    <name type="scientific">Paraburkholderia xenovorans (strain LB400)</name>
    <dbReference type="NCBI Taxonomy" id="266265"/>
    <lineage>
        <taxon>Bacteria</taxon>
        <taxon>Pseudomonadati</taxon>
        <taxon>Pseudomonadota</taxon>
        <taxon>Betaproteobacteria</taxon>
        <taxon>Burkholderiales</taxon>
        <taxon>Burkholderiaceae</taxon>
        <taxon>Paraburkholderia</taxon>
    </lineage>
</organism>
<protein>
    <recommendedName>
        <fullName evidence="1">Phosphonates import ATP-binding protein PhnC</fullName>
        <ecNumber evidence="1">7.3.2.2</ecNumber>
    </recommendedName>
</protein>
<proteinExistence type="inferred from homology"/>
<accession>Q13LC4</accession>
<reference key="1">
    <citation type="journal article" date="2006" name="Proc. Natl. Acad. Sci. U.S.A.">
        <title>Burkholderia xenovorans LB400 harbors a multi-replicon, 9.73-Mbp genome shaped for versatility.</title>
        <authorList>
            <person name="Chain P.S.G."/>
            <person name="Denef V.J."/>
            <person name="Konstantinidis K.T."/>
            <person name="Vergez L.M."/>
            <person name="Agullo L."/>
            <person name="Reyes V.L."/>
            <person name="Hauser L."/>
            <person name="Cordova M."/>
            <person name="Gomez L."/>
            <person name="Gonzalez M."/>
            <person name="Land M."/>
            <person name="Lao V."/>
            <person name="Larimer F."/>
            <person name="LiPuma J.J."/>
            <person name="Mahenthiralingam E."/>
            <person name="Malfatti S.A."/>
            <person name="Marx C.J."/>
            <person name="Parnell J.J."/>
            <person name="Ramette A."/>
            <person name="Richardson P."/>
            <person name="Seeger M."/>
            <person name="Smith D."/>
            <person name="Spilker T."/>
            <person name="Sul W.J."/>
            <person name="Tsoi T.V."/>
            <person name="Ulrich L.E."/>
            <person name="Zhulin I.B."/>
            <person name="Tiedje J.M."/>
        </authorList>
    </citation>
    <scope>NUCLEOTIDE SEQUENCE [LARGE SCALE GENOMIC DNA]</scope>
    <source>
        <strain>LB400</strain>
    </source>
</reference>
<dbReference type="EC" id="7.3.2.2" evidence="1"/>
<dbReference type="EMBL" id="CP000271">
    <property type="protein sequence ID" value="ABE35115.1"/>
    <property type="molecule type" value="Genomic_DNA"/>
</dbReference>
<dbReference type="RefSeq" id="WP_011492415.1">
    <property type="nucleotide sequence ID" value="NC_007952.1"/>
</dbReference>
<dbReference type="SMR" id="Q13LC4"/>
<dbReference type="STRING" id="266265.Bxe_B0839"/>
<dbReference type="KEGG" id="bxb:DR64_6161"/>
<dbReference type="KEGG" id="bxe:Bxe_B0839"/>
<dbReference type="PATRIC" id="fig|266265.5.peg.6943"/>
<dbReference type="eggNOG" id="COG3638">
    <property type="taxonomic scope" value="Bacteria"/>
</dbReference>
<dbReference type="OrthoDB" id="9802264at2"/>
<dbReference type="Proteomes" id="UP000001817">
    <property type="component" value="Chromosome 2"/>
</dbReference>
<dbReference type="GO" id="GO:0005886">
    <property type="term" value="C:plasma membrane"/>
    <property type="evidence" value="ECO:0007669"/>
    <property type="project" value="UniProtKB-SubCell"/>
</dbReference>
<dbReference type="GO" id="GO:0015416">
    <property type="term" value="F:ABC-type phosphonate transporter activity"/>
    <property type="evidence" value="ECO:0007669"/>
    <property type="project" value="UniProtKB-EC"/>
</dbReference>
<dbReference type="GO" id="GO:0005524">
    <property type="term" value="F:ATP binding"/>
    <property type="evidence" value="ECO:0007669"/>
    <property type="project" value="UniProtKB-KW"/>
</dbReference>
<dbReference type="GO" id="GO:0016887">
    <property type="term" value="F:ATP hydrolysis activity"/>
    <property type="evidence" value="ECO:0007669"/>
    <property type="project" value="InterPro"/>
</dbReference>
<dbReference type="CDD" id="cd03256">
    <property type="entry name" value="ABC_PhnC_transporter"/>
    <property type="match status" value="1"/>
</dbReference>
<dbReference type="Gene3D" id="3.40.50.300">
    <property type="entry name" value="P-loop containing nucleotide triphosphate hydrolases"/>
    <property type="match status" value="1"/>
</dbReference>
<dbReference type="InterPro" id="IPR003593">
    <property type="entry name" value="AAA+_ATPase"/>
</dbReference>
<dbReference type="InterPro" id="IPR003439">
    <property type="entry name" value="ABC_transporter-like_ATP-bd"/>
</dbReference>
<dbReference type="InterPro" id="IPR017871">
    <property type="entry name" value="ABC_transporter-like_CS"/>
</dbReference>
<dbReference type="InterPro" id="IPR012693">
    <property type="entry name" value="ABC_transpr_PhnC"/>
</dbReference>
<dbReference type="InterPro" id="IPR050086">
    <property type="entry name" value="MetN_ABC_transporter-like"/>
</dbReference>
<dbReference type="InterPro" id="IPR027417">
    <property type="entry name" value="P-loop_NTPase"/>
</dbReference>
<dbReference type="NCBIfam" id="TIGR02315">
    <property type="entry name" value="ABC_phnC"/>
    <property type="match status" value="1"/>
</dbReference>
<dbReference type="PANTHER" id="PTHR43166">
    <property type="entry name" value="AMINO ACID IMPORT ATP-BINDING PROTEIN"/>
    <property type="match status" value="1"/>
</dbReference>
<dbReference type="PANTHER" id="PTHR43166:SF6">
    <property type="entry name" value="PHOSPHONATES IMPORT ATP-BINDING PROTEIN PHNC"/>
    <property type="match status" value="1"/>
</dbReference>
<dbReference type="Pfam" id="PF00005">
    <property type="entry name" value="ABC_tran"/>
    <property type="match status" value="1"/>
</dbReference>
<dbReference type="SMART" id="SM00382">
    <property type="entry name" value="AAA"/>
    <property type="match status" value="1"/>
</dbReference>
<dbReference type="SUPFAM" id="SSF52540">
    <property type="entry name" value="P-loop containing nucleoside triphosphate hydrolases"/>
    <property type="match status" value="1"/>
</dbReference>
<dbReference type="PROSITE" id="PS00211">
    <property type="entry name" value="ABC_TRANSPORTER_1"/>
    <property type="match status" value="1"/>
</dbReference>
<dbReference type="PROSITE" id="PS50893">
    <property type="entry name" value="ABC_TRANSPORTER_2"/>
    <property type="match status" value="1"/>
</dbReference>
<dbReference type="PROSITE" id="PS51249">
    <property type="entry name" value="PHNC"/>
    <property type="match status" value="1"/>
</dbReference>
<sequence length="301" mass="33107">MDAIREAIRIERLSKTFSNGRKALDEIDLRIEPGEMVALIGASGSGKSTLLRHIAGFTASDAQPSQIEILGRPIQQNGRIVREVRSIRRDIGFVFQQFNLVNRLSVETNVLIGALARLPWWRRLSGRFPRAERALSIAALNEVGIGEHARERAANLSGGQQQRAALARALVQRARIVLADEPIASLDPESSRRVMDMLRTLNIEHRLTVLVSLHQVEIAMQYCPRTIALRRGKVVYDGPSAALTPALLKTLYGDEARELIDEAAQGPDDTESKNTADNTPLQDAAPASGRYAFALNPAHSN</sequence>
<keyword id="KW-0067">ATP-binding</keyword>
<keyword id="KW-0997">Cell inner membrane</keyword>
<keyword id="KW-1003">Cell membrane</keyword>
<keyword id="KW-0472">Membrane</keyword>
<keyword id="KW-0547">Nucleotide-binding</keyword>
<keyword id="KW-0918">Phosphonate transport</keyword>
<keyword id="KW-1185">Reference proteome</keyword>
<keyword id="KW-1278">Translocase</keyword>
<keyword id="KW-0813">Transport</keyword>
<feature type="chain" id="PRO_0000274707" description="Phosphonates import ATP-binding protein PhnC">
    <location>
        <begin position="1"/>
        <end position="301"/>
    </location>
</feature>
<feature type="domain" description="ABC transporter" evidence="1">
    <location>
        <begin position="8"/>
        <end position="256"/>
    </location>
</feature>
<feature type="region of interest" description="Disordered" evidence="2">
    <location>
        <begin position="264"/>
        <end position="287"/>
    </location>
</feature>
<feature type="binding site" evidence="1">
    <location>
        <begin position="41"/>
        <end position="48"/>
    </location>
    <ligand>
        <name>ATP</name>
        <dbReference type="ChEBI" id="CHEBI:30616"/>
    </ligand>
</feature>
<comment type="function">
    <text evidence="1">Part of the ABC transporter complex PhnCDE involved in phosphonates import. Responsible for energy coupling to the transport system.</text>
</comment>
<comment type="catalytic activity">
    <reaction evidence="1">
        <text>phosphonate(out) + ATP + H2O = phosphonate(in) + ADP + phosphate + H(+)</text>
        <dbReference type="Rhea" id="RHEA:18065"/>
        <dbReference type="ChEBI" id="CHEBI:15377"/>
        <dbReference type="ChEBI" id="CHEBI:15378"/>
        <dbReference type="ChEBI" id="CHEBI:16215"/>
        <dbReference type="ChEBI" id="CHEBI:30616"/>
        <dbReference type="ChEBI" id="CHEBI:43474"/>
        <dbReference type="ChEBI" id="CHEBI:456216"/>
        <dbReference type="EC" id="7.3.2.2"/>
    </reaction>
</comment>
<comment type="subunit">
    <text evidence="1">The complex is composed of two ATP-binding proteins (PhnC), two transmembrane proteins (PhnE) and a solute-binding protein (PhnD).</text>
</comment>
<comment type="subcellular location">
    <subcellularLocation>
        <location evidence="1">Cell inner membrane</location>
        <topology evidence="1">Peripheral membrane protein</topology>
    </subcellularLocation>
</comment>
<comment type="similarity">
    <text evidence="1">Belongs to the ABC transporter superfamily. Phosphonates importer (TC 3.A.1.9.1) family.</text>
</comment>